<reference key="1">
    <citation type="journal article" date="1994" name="J. Biol. Chem.">
        <title>Cloning, expression, and purification of a functional nonacetylated mammalian mitochondrial chaperonin 10.</title>
        <authorList>
            <person name="Dickson R."/>
            <person name="Larsen B."/>
            <person name="Viitanen P.V."/>
            <person name="Tormey M.B."/>
            <person name="Geske J."/>
            <person name="Strange R."/>
            <person name="Bemis L.T."/>
        </authorList>
    </citation>
    <scope>NUCLEOTIDE SEQUENCE [MRNA]</scope>
</reference>
<reference key="2">
    <citation type="journal article" date="2001" name="Mamm. Genome">
        <title>The murine chaperonin 10 gene family contains an intronless, putative gene for early pregnancy factor, Cpn10-rs1.</title>
        <authorList>
            <person name="Fletcher B.H."/>
            <person name="Cassady A.I."/>
            <person name="Summers K.M."/>
            <person name="Cavanagh A.C."/>
        </authorList>
    </citation>
    <scope>NUCLEOTIDE SEQUENCE [GENOMIC DNA]</scope>
    <source>
        <strain>129/Sv</strain>
    </source>
</reference>
<reference key="3">
    <citation type="journal article" date="2005" name="Science">
        <title>The transcriptional landscape of the mammalian genome.</title>
        <authorList>
            <person name="Carninci P."/>
            <person name="Kasukawa T."/>
            <person name="Katayama S."/>
            <person name="Gough J."/>
            <person name="Frith M.C."/>
            <person name="Maeda N."/>
            <person name="Oyama R."/>
            <person name="Ravasi T."/>
            <person name="Lenhard B."/>
            <person name="Wells C."/>
            <person name="Kodzius R."/>
            <person name="Shimokawa K."/>
            <person name="Bajic V.B."/>
            <person name="Brenner S.E."/>
            <person name="Batalov S."/>
            <person name="Forrest A.R."/>
            <person name="Zavolan M."/>
            <person name="Davis M.J."/>
            <person name="Wilming L.G."/>
            <person name="Aidinis V."/>
            <person name="Allen J.E."/>
            <person name="Ambesi-Impiombato A."/>
            <person name="Apweiler R."/>
            <person name="Aturaliya R.N."/>
            <person name="Bailey T.L."/>
            <person name="Bansal M."/>
            <person name="Baxter L."/>
            <person name="Beisel K.W."/>
            <person name="Bersano T."/>
            <person name="Bono H."/>
            <person name="Chalk A.M."/>
            <person name="Chiu K.P."/>
            <person name="Choudhary V."/>
            <person name="Christoffels A."/>
            <person name="Clutterbuck D.R."/>
            <person name="Crowe M.L."/>
            <person name="Dalla E."/>
            <person name="Dalrymple B.P."/>
            <person name="de Bono B."/>
            <person name="Della Gatta G."/>
            <person name="di Bernardo D."/>
            <person name="Down T."/>
            <person name="Engstrom P."/>
            <person name="Fagiolini M."/>
            <person name="Faulkner G."/>
            <person name="Fletcher C.F."/>
            <person name="Fukushima T."/>
            <person name="Furuno M."/>
            <person name="Futaki S."/>
            <person name="Gariboldi M."/>
            <person name="Georgii-Hemming P."/>
            <person name="Gingeras T.R."/>
            <person name="Gojobori T."/>
            <person name="Green R.E."/>
            <person name="Gustincich S."/>
            <person name="Harbers M."/>
            <person name="Hayashi Y."/>
            <person name="Hensch T.K."/>
            <person name="Hirokawa N."/>
            <person name="Hill D."/>
            <person name="Huminiecki L."/>
            <person name="Iacono M."/>
            <person name="Ikeo K."/>
            <person name="Iwama A."/>
            <person name="Ishikawa T."/>
            <person name="Jakt M."/>
            <person name="Kanapin A."/>
            <person name="Katoh M."/>
            <person name="Kawasawa Y."/>
            <person name="Kelso J."/>
            <person name="Kitamura H."/>
            <person name="Kitano H."/>
            <person name="Kollias G."/>
            <person name="Krishnan S.P."/>
            <person name="Kruger A."/>
            <person name="Kummerfeld S.K."/>
            <person name="Kurochkin I.V."/>
            <person name="Lareau L.F."/>
            <person name="Lazarevic D."/>
            <person name="Lipovich L."/>
            <person name="Liu J."/>
            <person name="Liuni S."/>
            <person name="McWilliam S."/>
            <person name="Madan Babu M."/>
            <person name="Madera M."/>
            <person name="Marchionni L."/>
            <person name="Matsuda H."/>
            <person name="Matsuzawa S."/>
            <person name="Miki H."/>
            <person name="Mignone F."/>
            <person name="Miyake S."/>
            <person name="Morris K."/>
            <person name="Mottagui-Tabar S."/>
            <person name="Mulder N."/>
            <person name="Nakano N."/>
            <person name="Nakauchi H."/>
            <person name="Ng P."/>
            <person name="Nilsson R."/>
            <person name="Nishiguchi S."/>
            <person name="Nishikawa S."/>
            <person name="Nori F."/>
            <person name="Ohara O."/>
            <person name="Okazaki Y."/>
            <person name="Orlando V."/>
            <person name="Pang K.C."/>
            <person name="Pavan W.J."/>
            <person name="Pavesi G."/>
            <person name="Pesole G."/>
            <person name="Petrovsky N."/>
            <person name="Piazza S."/>
            <person name="Reed J."/>
            <person name="Reid J.F."/>
            <person name="Ring B.Z."/>
            <person name="Ringwald M."/>
            <person name="Rost B."/>
            <person name="Ruan Y."/>
            <person name="Salzberg S.L."/>
            <person name="Sandelin A."/>
            <person name="Schneider C."/>
            <person name="Schoenbach C."/>
            <person name="Sekiguchi K."/>
            <person name="Semple C.A."/>
            <person name="Seno S."/>
            <person name="Sessa L."/>
            <person name="Sheng Y."/>
            <person name="Shibata Y."/>
            <person name="Shimada H."/>
            <person name="Shimada K."/>
            <person name="Silva D."/>
            <person name="Sinclair B."/>
            <person name="Sperling S."/>
            <person name="Stupka E."/>
            <person name="Sugiura K."/>
            <person name="Sultana R."/>
            <person name="Takenaka Y."/>
            <person name="Taki K."/>
            <person name="Tammoja K."/>
            <person name="Tan S.L."/>
            <person name="Tang S."/>
            <person name="Taylor M.S."/>
            <person name="Tegner J."/>
            <person name="Teichmann S.A."/>
            <person name="Ueda H.R."/>
            <person name="van Nimwegen E."/>
            <person name="Verardo R."/>
            <person name="Wei C.L."/>
            <person name="Yagi K."/>
            <person name="Yamanishi H."/>
            <person name="Zabarovsky E."/>
            <person name="Zhu S."/>
            <person name="Zimmer A."/>
            <person name="Hide W."/>
            <person name="Bult C."/>
            <person name="Grimmond S.M."/>
            <person name="Teasdale R.D."/>
            <person name="Liu E.T."/>
            <person name="Brusic V."/>
            <person name="Quackenbush J."/>
            <person name="Wahlestedt C."/>
            <person name="Mattick J.S."/>
            <person name="Hume D.A."/>
            <person name="Kai C."/>
            <person name="Sasaki D."/>
            <person name="Tomaru Y."/>
            <person name="Fukuda S."/>
            <person name="Kanamori-Katayama M."/>
            <person name="Suzuki M."/>
            <person name="Aoki J."/>
            <person name="Arakawa T."/>
            <person name="Iida J."/>
            <person name="Imamura K."/>
            <person name="Itoh M."/>
            <person name="Kato T."/>
            <person name="Kawaji H."/>
            <person name="Kawagashira N."/>
            <person name="Kawashima T."/>
            <person name="Kojima M."/>
            <person name="Kondo S."/>
            <person name="Konno H."/>
            <person name="Nakano K."/>
            <person name="Ninomiya N."/>
            <person name="Nishio T."/>
            <person name="Okada M."/>
            <person name="Plessy C."/>
            <person name="Shibata K."/>
            <person name="Shiraki T."/>
            <person name="Suzuki S."/>
            <person name="Tagami M."/>
            <person name="Waki K."/>
            <person name="Watahiki A."/>
            <person name="Okamura-Oho Y."/>
            <person name="Suzuki H."/>
            <person name="Kawai J."/>
            <person name="Hayashizaki Y."/>
        </authorList>
    </citation>
    <scope>NUCLEOTIDE SEQUENCE [LARGE SCALE MRNA]</scope>
    <source>
        <strain>NOD</strain>
        <tissue>Thymus</tissue>
    </source>
</reference>
<reference key="4">
    <citation type="journal article" date="2004" name="Genome Res.">
        <title>The status, quality, and expansion of the NIH full-length cDNA project: the Mammalian Gene Collection (MGC).</title>
        <authorList>
            <consortium name="The MGC Project Team"/>
        </authorList>
    </citation>
    <scope>NUCLEOTIDE SEQUENCE [LARGE SCALE MRNA]</scope>
    <source>
        <strain>FVB/N-3</strain>
        <tissue>Mammary gland</tissue>
    </source>
</reference>
<reference key="5">
    <citation type="submission" date="2007-04" db="UniProtKB">
        <authorList>
            <person name="Lubec G."/>
            <person name="Kang S.U."/>
        </authorList>
    </citation>
    <scope>PROTEIN SEQUENCE OF 8-15; 29-36; 41-54 AND 71-92</scope>
    <scope>IDENTIFICATION BY MASS SPECTROMETRY</scope>
    <source>
        <strain>C57BL/6J</strain>
        <tissue>Brain</tissue>
    </source>
</reference>
<reference key="6">
    <citation type="journal article" date="2010" name="Cell">
        <title>A tissue-specific atlas of mouse protein phosphorylation and expression.</title>
        <authorList>
            <person name="Huttlin E.L."/>
            <person name="Jedrychowski M.P."/>
            <person name="Elias J.E."/>
            <person name="Goswami T."/>
            <person name="Rad R."/>
            <person name="Beausoleil S.A."/>
            <person name="Villen J."/>
            <person name="Haas W."/>
            <person name="Sowa M.E."/>
            <person name="Gygi S.P."/>
        </authorList>
    </citation>
    <scope>PHOSPHORYLATION [LARGE SCALE ANALYSIS] AT SER-57</scope>
    <scope>IDENTIFICATION BY MASS SPECTROMETRY [LARGE SCALE ANALYSIS]</scope>
    <source>
        <tissue>Brain</tissue>
        <tissue>Brown adipose tissue</tissue>
        <tissue>Heart</tissue>
        <tissue>Kidney</tissue>
        <tissue>Liver</tissue>
        <tissue>Lung</tissue>
        <tissue>Pancreas</tissue>
        <tissue>Spleen</tissue>
        <tissue>Testis</tissue>
    </source>
</reference>
<reference key="7">
    <citation type="journal article" date="2013" name="Mol. Cell">
        <title>SIRT5-mediated lysine desuccinylation impacts diverse metabolic pathways.</title>
        <authorList>
            <person name="Park J."/>
            <person name="Chen Y."/>
            <person name="Tishkoff D.X."/>
            <person name="Peng C."/>
            <person name="Tan M."/>
            <person name="Dai L."/>
            <person name="Xie Z."/>
            <person name="Zhang Y."/>
            <person name="Zwaans B.M."/>
            <person name="Skinner M.E."/>
            <person name="Lombard D.B."/>
            <person name="Zhao Y."/>
        </authorList>
    </citation>
    <scope>ACETYLATION [LARGE SCALE ANALYSIS] AT LYS-56</scope>
    <scope>SUCCINYLATION [LARGE SCALE ANALYSIS] AT LYS-28; LYS-40; LYS-54; LYS-56; LYS-66; LYS-70; LYS-80 AND LYS-86</scope>
    <scope>IDENTIFICATION BY MASS SPECTROMETRY [LARGE SCALE ANALYSIS]</scope>
    <source>
        <tissue>Embryonic fibroblast</tissue>
        <tissue>Liver</tissue>
    </source>
</reference>
<reference key="8">
    <citation type="journal article" date="2013" name="Proc. Natl. Acad. Sci. U.S.A.">
        <title>Label-free quantitative proteomics of the lysine acetylome in mitochondria identifies substrates of SIRT3 in metabolic pathways.</title>
        <authorList>
            <person name="Rardin M.J."/>
            <person name="Newman J.C."/>
            <person name="Held J.M."/>
            <person name="Cusack M.P."/>
            <person name="Sorensen D.J."/>
            <person name="Li B."/>
            <person name="Schilling B."/>
            <person name="Mooney S.D."/>
            <person name="Kahn C.R."/>
            <person name="Verdin E."/>
            <person name="Gibson B.W."/>
        </authorList>
    </citation>
    <scope>ACETYLATION [LARGE SCALE ANALYSIS] AT LYS-8; LYS-40; LYS-56; LYS-66; LYS-70; LYS-80; LYS-86 AND LYS-99</scope>
    <scope>IDENTIFICATION BY MASS SPECTROMETRY [LARGE SCALE ANALYSIS]</scope>
    <source>
        <tissue>Liver</tissue>
    </source>
</reference>
<evidence type="ECO:0000250" key="1"/>
<evidence type="ECO:0000250" key="2">
    <source>
        <dbReference type="UniProtKB" id="P61604"/>
    </source>
</evidence>
<evidence type="ECO:0000305" key="3"/>
<evidence type="ECO:0007744" key="4">
    <source>
    </source>
</evidence>
<evidence type="ECO:0007744" key="5">
    <source>
    </source>
</evidence>
<evidence type="ECO:0007744" key="6">
    <source>
    </source>
</evidence>
<gene>
    <name type="primary">Hspe1</name>
</gene>
<keyword id="KW-0007">Acetylation</keyword>
<keyword id="KW-0143">Chaperone</keyword>
<keyword id="KW-0903">Direct protein sequencing</keyword>
<keyword id="KW-0496">Mitochondrion</keyword>
<keyword id="KW-0597">Phosphoprotein</keyword>
<keyword id="KW-1185">Reference proteome</keyword>
<keyword id="KW-0346">Stress response</keyword>
<feature type="initiator methionine" description="Removed" evidence="2">
    <location>
        <position position="1"/>
    </location>
</feature>
<feature type="chain" id="PRO_0000174918" description="10 kDa heat shock protein, mitochondrial">
    <location>
        <begin position="2"/>
        <end position="102"/>
    </location>
</feature>
<feature type="modified residue" description="N-acetylalanine" evidence="2">
    <location>
        <position position="2"/>
    </location>
</feature>
<feature type="modified residue" description="N6-acetyllysine" evidence="5">
    <location>
        <position position="8"/>
    </location>
</feature>
<feature type="modified residue" description="N6-succinyllysine" evidence="6">
    <location>
        <position position="28"/>
    </location>
</feature>
<feature type="modified residue" description="N6-acetyllysine; alternate" evidence="5">
    <location>
        <position position="40"/>
    </location>
</feature>
<feature type="modified residue" description="N6-malonyllysine; alternate" evidence="1">
    <location>
        <position position="40"/>
    </location>
</feature>
<feature type="modified residue" description="N6-succinyllysine; alternate" evidence="6">
    <location>
        <position position="40"/>
    </location>
</feature>
<feature type="modified residue" description="N6-malonyllysine; alternate" evidence="1">
    <location>
        <position position="54"/>
    </location>
</feature>
<feature type="modified residue" description="N6-succinyllysine; alternate" evidence="6">
    <location>
        <position position="54"/>
    </location>
</feature>
<feature type="modified residue" description="N6-acetyllysine; alternate" evidence="5 6">
    <location>
        <position position="56"/>
    </location>
</feature>
<feature type="modified residue" description="N6-malonyllysine; alternate" evidence="1">
    <location>
        <position position="56"/>
    </location>
</feature>
<feature type="modified residue" description="N6-succinyllysine; alternate" evidence="6">
    <location>
        <position position="56"/>
    </location>
</feature>
<feature type="modified residue" description="Phosphoserine" evidence="4">
    <location>
        <position position="57"/>
    </location>
</feature>
<feature type="modified residue" description="N6-acetyllysine; alternate" evidence="5">
    <location>
        <position position="66"/>
    </location>
</feature>
<feature type="modified residue" description="N6-succinyllysine; alternate" evidence="6">
    <location>
        <position position="66"/>
    </location>
</feature>
<feature type="modified residue" description="N6-acetyllysine; alternate" evidence="5">
    <location>
        <position position="70"/>
    </location>
</feature>
<feature type="modified residue" description="N6-succinyllysine; alternate" evidence="6">
    <location>
        <position position="70"/>
    </location>
</feature>
<feature type="modified residue" description="Phosphothreonine" evidence="2">
    <location>
        <position position="79"/>
    </location>
</feature>
<feature type="modified residue" description="N6-acetyllysine; alternate" evidence="5">
    <location>
        <position position="80"/>
    </location>
</feature>
<feature type="modified residue" description="N6-succinyllysine; alternate" evidence="6">
    <location>
        <position position="80"/>
    </location>
</feature>
<feature type="modified residue" description="N6-acetyllysine; alternate" evidence="5">
    <location>
        <position position="86"/>
    </location>
</feature>
<feature type="modified residue" description="N6-succinyllysine; alternate" evidence="6">
    <location>
        <position position="86"/>
    </location>
</feature>
<feature type="modified residue" description="N6-acetyllysine" evidence="5">
    <location>
        <position position="99"/>
    </location>
</feature>
<name>CH10_MOUSE</name>
<comment type="function">
    <text evidence="2">Co-chaperonin implicated in mitochondrial protein import and macromolecular assembly. Together with Hsp60, facilitates the correct folding of imported proteins. May also prevent misfolding and promote the refolding and proper assembly of unfolded polypeptides generated under stress conditions in the mitochondrial matrix. The functional units of these chaperonins consist of heptameric rings of the large subunit Hsp60, which function as a back-to-back double ring. In a cyclic reaction, Hsp60 ring complexes bind one unfolded substrate protein per ring, followed by the binding of ATP and association with 2 heptameric rings of the co-chaperonin Hsp10. This leads to sequestration of the substrate protein in the inner cavity of Hsp60 where, for a certain period of time, it can fold undisturbed by other cell components. Synchronous hydrolysis of ATP in all Hsp60 subunits results in the dissociation of the chaperonin rings and the release of ADP and the folded substrate protein.</text>
</comment>
<comment type="subunit">
    <text evidence="2">Homoheptamer arranged in a ring structure. 2 heptameric Hsp10 rings interact with a Hsp60 tetradecamer in the structure of a back-to-back double heptameric ring to form the symmetrical football complex.</text>
</comment>
<comment type="subcellular location">
    <subcellularLocation>
        <location evidence="2">Mitochondrion matrix</location>
    </subcellularLocation>
</comment>
<comment type="induction">
    <text>By stress.</text>
</comment>
<comment type="similarity">
    <text evidence="3">Belongs to the GroES chaperonin family.</text>
</comment>
<protein>
    <recommendedName>
        <fullName>10 kDa heat shock protein, mitochondrial</fullName>
        <shortName>Hsp10</shortName>
    </recommendedName>
    <alternativeName>
        <fullName>10 kDa chaperonin</fullName>
    </alternativeName>
    <alternativeName>
        <fullName>Chaperonin 10</fullName>
        <shortName>CPN10</shortName>
    </alternativeName>
</protein>
<proteinExistence type="evidence at protein level"/>
<organism>
    <name type="scientific">Mus musculus</name>
    <name type="common">Mouse</name>
    <dbReference type="NCBI Taxonomy" id="10090"/>
    <lineage>
        <taxon>Eukaryota</taxon>
        <taxon>Metazoa</taxon>
        <taxon>Chordata</taxon>
        <taxon>Craniata</taxon>
        <taxon>Vertebrata</taxon>
        <taxon>Euteleostomi</taxon>
        <taxon>Mammalia</taxon>
        <taxon>Eutheria</taxon>
        <taxon>Euarchontoglires</taxon>
        <taxon>Glires</taxon>
        <taxon>Rodentia</taxon>
        <taxon>Myomorpha</taxon>
        <taxon>Muroidea</taxon>
        <taxon>Muridae</taxon>
        <taxon>Murinae</taxon>
        <taxon>Mus</taxon>
        <taxon>Mus</taxon>
    </lineage>
</organism>
<accession>Q64433</accession>
<sequence length="102" mass="10963">MAGQAFRKFLPLFDRVLVERSAAETVTKGGIMLPEKSQGKVLQATVVAVGSGGKGKSGEIEPVSVKVGDKVLLPEYGGTKVVLDDKDYFLFRDSDILGKYVD</sequence>
<dbReference type="EMBL" id="U09659">
    <property type="protein sequence ID" value="AAA62229.1"/>
    <property type="molecule type" value="mRNA"/>
</dbReference>
<dbReference type="EMBL" id="AF251024">
    <property type="protein sequence ID" value="AAF67345.1"/>
    <property type="molecule type" value="Genomic_DNA"/>
</dbReference>
<dbReference type="EMBL" id="AK088121">
    <property type="protein sequence ID" value="BAC40159.1"/>
    <property type="molecule type" value="mRNA"/>
</dbReference>
<dbReference type="EMBL" id="BC024385">
    <property type="protein sequence ID" value="AAH24385.1"/>
    <property type="molecule type" value="mRNA"/>
</dbReference>
<dbReference type="CCDS" id="CCDS35570.1"/>
<dbReference type="PIR" id="A55075">
    <property type="entry name" value="A55075"/>
</dbReference>
<dbReference type="RefSeq" id="NP_032329.1">
    <property type="nucleotide sequence ID" value="NM_008303.4"/>
</dbReference>
<dbReference type="SMR" id="Q64433"/>
<dbReference type="BioGRID" id="200459">
    <property type="interactions" value="28"/>
</dbReference>
<dbReference type="FunCoup" id="Q64433">
    <property type="interactions" value="2034"/>
</dbReference>
<dbReference type="IntAct" id="Q64433">
    <property type="interactions" value="1"/>
</dbReference>
<dbReference type="STRING" id="10090.ENSMUSP00000074724"/>
<dbReference type="GlyGen" id="Q64433">
    <property type="glycosylation" value="1 site, 1 O-linked glycan (1 site)"/>
</dbReference>
<dbReference type="iPTMnet" id="Q64433"/>
<dbReference type="PhosphoSitePlus" id="Q64433"/>
<dbReference type="SwissPalm" id="Q64433"/>
<dbReference type="REPRODUCTION-2DPAGE" id="Q64433"/>
<dbReference type="jPOST" id="Q64433"/>
<dbReference type="PaxDb" id="10090-ENSMUSP00000074724"/>
<dbReference type="ProteomicsDB" id="281659"/>
<dbReference type="Pumba" id="Q64433"/>
<dbReference type="TopDownProteomics" id="Q64433"/>
<dbReference type="DNASU" id="15528"/>
<dbReference type="Ensembl" id="ENSMUST00000075242.7">
    <property type="protein sequence ID" value="ENSMUSP00000074724.7"/>
    <property type="gene ID" value="ENSMUSG00000073676.5"/>
</dbReference>
<dbReference type="GeneID" id="15528"/>
<dbReference type="KEGG" id="mmu:15528"/>
<dbReference type="UCSC" id="uc007bac.2">
    <property type="organism name" value="mouse"/>
</dbReference>
<dbReference type="AGR" id="MGI:104680"/>
<dbReference type="CTD" id="3336"/>
<dbReference type="MGI" id="MGI:104680">
    <property type="gene designation" value="Hspe1"/>
</dbReference>
<dbReference type="VEuPathDB" id="HostDB:ENSMUSG00000073676"/>
<dbReference type="eggNOG" id="KOG1641">
    <property type="taxonomic scope" value="Eukaryota"/>
</dbReference>
<dbReference type="GeneTree" id="ENSGT00390000006350"/>
<dbReference type="HOGENOM" id="CLU_132825_0_1_1"/>
<dbReference type="InParanoid" id="Q64433"/>
<dbReference type="OMA" id="EDFLIMR"/>
<dbReference type="OrthoDB" id="184876at2759"/>
<dbReference type="PhylomeDB" id="Q64433"/>
<dbReference type="TreeFam" id="TF313814"/>
<dbReference type="Reactome" id="R-MMU-9013408">
    <property type="pathway name" value="RHOG GTPase cycle"/>
</dbReference>
<dbReference type="BioGRID-ORCS" id="15528">
    <property type="hits" value="15 hits in 46 CRISPR screens"/>
</dbReference>
<dbReference type="ChiTaRS" id="Hspe1">
    <property type="organism name" value="mouse"/>
</dbReference>
<dbReference type="PRO" id="PR:Q64433"/>
<dbReference type="Proteomes" id="UP000000589">
    <property type="component" value="Chromosome 1"/>
</dbReference>
<dbReference type="RNAct" id="Q64433">
    <property type="molecule type" value="protein"/>
</dbReference>
<dbReference type="Bgee" id="ENSMUSG00000073676">
    <property type="expression patterns" value="Expressed in epiblast cell in embryo and 200 other cell types or tissues"/>
</dbReference>
<dbReference type="ExpressionAtlas" id="Q64433">
    <property type="expression patterns" value="baseline and differential"/>
</dbReference>
<dbReference type="GO" id="GO:0005759">
    <property type="term" value="C:mitochondrial matrix"/>
    <property type="evidence" value="ECO:0007669"/>
    <property type="project" value="UniProtKB-SubCell"/>
</dbReference>
<dbReference type="GO" id="GO:0005739">
    <property type="term" value="C:mitochondrion"/>
    <property type="evidence" value="ECO:0007005"/>
    <property type="project" value="MGI"/>
</dbReference>
<dbReference type="GO" id="GO:0005524">
    <property type="term" value="F:ATP binding"/>
    <property type="evidence" value="ECO:0007669"/>
    <property type="project" value="InterPro"/>
</dbReference>
<dbReference type="GO" id="GO:0044183">
    <property type="term" value="F:protein folding chaperone"/>
    <property type="evidence" value="ECO:0007669"/>
    <property type="project" value="InterPro"/>
</dbReference>
<dbReference type="GO" id="GO:0051087">
    <property type="term" value="F:protein-folding chaperone binding"/>
    <property type="evidence" value="ECO:0000250"/>
    <property type="project" value="UniProtKB"/>
</dbReference>
<dbReference type="CDD" id="cd00320">
    <property type="entry name" value="cpn10"/>
    <property type="match status" value="1"/>
</dbReference>
<dbReference type="FunFam" id="2.30.33.40:FF:000002">
    <property type="entry name" value="10 kDa chaperonin, mitochondrial"/>
    <property type="match status" value="1"/>
</dbReference>
<dbReference type="Gene3D" id="2.30.33.40">
    <property type="entry name" value="GroES chaperonin"/>
    <property type="match status" value="1"/>
</dbReference>
<dbReference type="HAMAP" id="MF_00580">
    <property type="entry name" value="CH10"/>
    <property type="match status" value="1"/>
</dbReference>
<dbReference type="InterPro" id="IPR020818">
    <property type="entry name" value="Chaperonin_GroES"/>
</dbReference>
<dbReference type="InterPro" id="IPR037124">
    <property type="entry name" value="Chaperonin_GroES_sf"/>
</dbReference>
<dbReference type="InterPro" id="IPR018369">
    <property type="entry name" value="Chaprnonin_Cpn10_CS"/>
</dbReference>
<dbReference type="InterPro" id="IPR011032">
    <property type="entry name" value="GroES-like_sf"/>
</dbReference>
<dbReference type="PANTHER" id="PTHR10772">
    <property type="entry name" value="10 KDA HEAT SHOCK PROTEIN"/>
    <property type="match status" value="1"/>
</dbReference>
<dbReference type="PANTHER" id="PTHR10772:SF0">
    <property type="entry name" value="10 KDA HEAT SHOCK PROTEIN, MITOCHONDRIAL"/>
    <property type="match status" value="1"/>
</dbReference>
<dbReference type="Pfam" id="PF00166">
    <property type="entry name" value="Cpn10"/>
    <property type="match status" value="1"/>
</dbReference>
<dbReference type="PRINTS" id="PR00297">
    <property type="entry name" value="CHAPERONIN10"/>
</dbReference>
<dbReference type="SMART" id="SM00883">
    <property type="entry name" value="Cpn10"/>
    <property type="match status" value="1"/>
</dbReference>
<dbReference type="SUPFAM" id="SSF50129">
    <property type="entry name" value="GroES-like"/>
    <property type="match status" value="1"/>
</dbReference>
<dbReference type="PROSITE" id="PS00681">
    <property type="entry name" value="CHAPERONINS_CPN10"/>
    <property type="match status" value="1"/>
</dbReference>